<keyword id="KW-0687">Ribonucleoprotein</keyword>
<keyword id="KW-0689">Ribosomal protein</keyword>
<proteinExistence type="inferred from homology"/>
<feature type="chain" id="PRO_1000060501" description="Large ribosomal subunit protein bL31B">
    <location>
        <begin position="1"/>
        <end position="86"/>
    </location>
</feature>
<comment type="subunit">
    <text evidence="1">Part of the 50S ribosomal subunit.</text>
</comment>
<comment type="similarity">
    <text evidence="1">Belongs to the bacterial ribosomal protein bL31 family. Type B subfamily.</text>
</comment>
<evidence type="ECO:0000255" key="1">
    <source>
        <dbReference type="HAMAP-Rule" id="MF_00502"/>
    </source>
</evidence>
<evidence type="ECO:0000305" key="2"/>
<sequence>MKPNIHPPYRTVVFHDTSADAYFTVGSTIATERTIERDGQTYPYVTLDISSASHPYYTGKQKEFAKEGSTARFHQRFGSFLTKKTN</sequence>
<gene>
    <name evidence="1" type="primary">rpmE2</name>
    <name type="ordered locus">YpsIP31758_3069</name>
</gene>
<organism>
    <name type="scientific">Yersinia pseudotuberculosis serotype O:1b (strain IP 31758)</name>
    <dbReference type="NCBI Taxonomy" id="349747"/>
    <lineage>
        <taxon>Bacteria</taxon>
        <taxon>Pseudomonadati</taxon>
        <taxon>Pseudomonadota</taxon>
        <taxon>Gammaproteobacteria</taxon>
        <taxon>Enterobacterales</taxon>
        <taxon>Yersiniaceae</taxon>
        <taxon>Yersinia</taxon>
    </lineage>
</organism>
<reference key="1">
    <citation type="journal article" date="2007" name="PLoS Genet.">
        <title>The complete genome sequence of Yersinia pseudotuberculosis IP31758, the causative agent of Far East scarlet-like fever.</title>
        <authorList>
            <person name="Eppinger M."/>
            <person name="Rosovitz M.J."/>
            <person name="Fricke W.F."/>
            <person name="Rasko D.A."/>
            <person name="Kokorina G."/>
            <person name="Fayolle C."/>
            <person name="Lindler L.E."/>
            <person name="Carniel E."/>
            <person name="Ravel J."/>
        </authorList>
    </citation>
    <scope>NUCLEOTIDE SEQUENCE [LARGE SCALE GENOMIC DNA]</scope>
    <source>
        <strain>IP 31758</strain>
    </source>
</reference>
<accession>A7FLA1</accession>
<name>RL31B_YERP3</name>
<protein>
    <recommendedName>
        <fullName evidence="1">Large ribosomal subunit protein bL31B</fullName>
    </recommendedName>
    <alternativeName>
        <fullName evidence="2">50S ribosomal protein L31 type B</fullName>
    </alternativeName>
</protein>
<dbReference type="EMBL" id="CP000720">
    <property type="protein sequence ID" value="ABS49202.1"/>
    <property type="molecule type" value="Genomic_DNA"/>
</dbReference>
<dbReference type="RefSeq" id="WP_002208617.1">
    <property type="nucleotide sequence ID" value="NC_009708.1"/>
</dbReference>
<dbReference type="SMR" id="A7FLA1"/>
<dbReference type="KEGG" id="ypi:YpsIP31758_3069"/>
<dbReference type="HOGENOM" id="CLU_114306_2_1_6"/>
<dbReference type="Proteomes" id="UP000002412">
    <property type="component" value="Chromosome"/>
</dbReference>
<dbReference type="GO" id="GO:1990904">
    <property type="term" value="C:ribonucleoprotein complex"/>
    <property type="evidence" value="ECO:0007669"/>
    <property type="project" value="UniProtKB-KW"/>
</dbReference>
<dbReference type="GO" id="GO:0005840">
    <property type="term" value="C:ribosome"/>
    <property type="evidence" value="ECO:0007669"/>
    <property type="project" value="UniProtKB-KW"/>
</dbReference>
<dbReference type="GO" id="GO:0003735">
    <property type="term" value="F:structural constituent of ribosome"/>
    <property type="evidence" value="ECO:0007669"/>
    <property type="project" value="InterPro"/>
</dbReference>
<dbReference type="GO" id="GO:0006412">
    <property type="term" value="P:translation"/>
    <property type="evidence" value="ECO:0007669"/>
    <property type="project" value="UniProtKB-UniRule"/>
</dbReference>
<dbReference type="Gene3D" id="4.10.830.30">
    <property type="entry name" value="Ribosomal protein L31"/>
    <property type="match status" value="1"/>
</dbReference>
<dbReference type="HAMAP" id="MF_00502">
    <property type="entry name" value="Ribosomal_bL31_2"/>
    <property type="match status" value="1"/>
</dbReference>
<dbReference type="InterPro" id="IPR034704">
    <property type="entry name" value="Ribosomal_bL28/bL31-like_sf"/>
</dbReference>
<dbReference type="InterPro" id="IPR002150">
    <property type="entry name" value="Ribosomal_bL31"/>
</dbReference>
<dbReference type="InterPro" id="IPR027493">
    <property type="entry name" value="Ribosomal_bL31_B"/>
</dbReference>
<dbReference type="InterPro" id="IPR042105">
    <property type="entry name" value="Ribosomal_bL31_sf"/>
</dbReference>
<dbReference type="NCBIfam" id="TIGR00105">
    <property type="entry name" value="L31"/>
    <property type="match status" value="1"/>
</dbReference>
<dbReference type="NCBIfam" id="NF002462">
    <property type="entry name" value="PRK01678.1"/>
    <property type="match status" value="1"/>
</dbReference>
<dbReference type="PANTHER" id="PTHR33280">
    <property type="entry name" value="50S RIBOSOMAL PROTEIN L31, CHLOROPLASTIC"/>
    <property type="match status" value="1"/>
</dbReference>
<dbReference type="PANTHER" id="PTHR33280:SF1">
    <property type="entry name" value="LARGE RIBOSOMAL SUBUNIT PROTEIN BL31C"/>
    <property type="match status" value="1"/>
</dbReference>
<dbReference type="Pfam" id="PF01197">
    <property type="entry name" value="Ribosomal_L31"/>
    <property type="match status" value="1"/>
</dbReference>
<dbReference type="PRINTS" id="PR01249">
    <property type="entry name" value="RIBOSOMALL31"/>
</dbReference>
<dbReference type="SUPFAM" id="SSF143800">
    <property type="entry name" value="L28p-like"/>
    <property type="match status" value="1"/>
</dbReference>